<name>RL21_CORJK</name>
<keyword id="KW-1185">Reference proteome</keyword>
<keyword id="KW-0687">Ribonucleoprotein</keyword>
<keyword id="KW-0689">Ribosomal protein</keyword>
<keyword id="KW-0694">RNA-binding</keyword>
<keyword id="KW-0699">rRNA-binding</keyword>
<organism>
    <name type="scientific">Corynebacterium jeikeium (strain K411)</name>
    <dbReference type="NCBI Taxonomy" id="306537"/>
    <lineage>
        <taxon>Bacteria</taxon>
        <taxon>Bacillati</taxon>
        <taxon>Actinomycetota</taxon>
        <taxon>Actinomycetes</taxon>
        <taxon>Mycobacteriales</taxon>
        <taxon>Corynebacteriaceae</taxon>
        <taxon>Corynebacterium</taxon>
    </lineage>
</organism>
<reference key="1">
    <citation type="journal article" date="2005" name="J. Bacteriol.">
        <title>Complete genome sequence and analysis of the multiresistant nosocomial pathogen Corynebacterium jeikeium K411, a lipid-requiring bacterium of the human skin flora.</title>
        <authorList>
            <person name="Tauch A."/>
            <person name="Kaiser O."/>
            <person name="Hain T."/>
            <person name="Goesmann A."/>
            <person name="Weisshaar B."/>
            <person name="Albersmeier A."/>
            <person name="Bekel T."/>
            <person name="Bischoff N."/>
            <person name="Brune I."/>
            <person name="Chakraborty T."/>
            <person name="Kalinowski J."/>
            <person name="Meyer F."/>
            <person name="Rupp O."/>
            <person name="Schneiker S."/>
            <person name="Viehoever P."/>
            <person name="Puehler A."/>
        </authorList>
    </citation>
    <scope>NUCLEOTIDE SEQUENCE [LARGE SCALE GENOMIC DNA]</scope>
    <source>
        <strain>K411</strain>
    </source>
</reference>
<sequence length="100" mass="10862">MYAIVKTGGKQYKVAEGDLVKVEKIEGEPGSSVALTPVLVVDGANVTTGDKLASVNVNAEIVEHVRGPKIRGMHYRNKTGYKRRFGHRQSLTVLKVTGIK</sequence>
<proteinExistence type="inferred from homology"/>
<gene>
    <name evidence="1" type="primary">rplU</name>
    <name type="ordered locus">jk0557</name>
</gene>
<evidence type="ECO:0000255" key="1">
    <source>
        <dbReference type="HAMAP-Rule" id="MF_01363"/>
    </source>
</evidence>
<evidence type="ECO:0000305" key="2"/>
<feature type="chain" id="PRO_0000270658" description="Large ribosomal subunit protein bL21">
    <location>
        <begin position="1"/>
        <end position="100"/>
    </location>
</feature>
<dbReference type="EMBL" id="CR931997">
    <property type="protein sequence ID" value="CAI36716.1"/>
    <property type="molecule type" value="Genomic_DNA"/>
</dbReference>
<dbReference type="RefSeq" id="WP_005296481.1">
    <property type="nucleotide sequence ID" value="NC_007164.1"/>
</dbReference>
<dbReference type="SMR" id="Q4JWU1"/>
<dbReference type="STRING" id="306537.jk0557"/>
<dbReference type="GeneID" id="92738060"/>
<dbReference type="KEGG" id="cjk:jk0557"/>
<dbReference type="eggNOG" id="COG0261">
    <property type="taxonomic scope" value="Bacteria"/>
</dbReference>
<dbReference type="HOGENOM" id="CLU_061463_3_0_11"/>
<dbReference type="OrthoDB" id="9813334at2"/>
<dbReference type="Proteomes" id="UP000000545">
    <property type="component" value="Chromosome"/>
</dbReference>
<dbReference type="GO" id="GO:0005737">
    <property type="term" value="C:cytoplasm"/>
    <property type="evidence" value="ECO:0007669"/>
    <property type="project" value="UniProtKB-ARBA"/>
</dbReference>
<dbReference type="GO" id="GO:1990904">
    <property type="term" value="C:ribonucleoprotein complex"/>
    <property type="evidence" value="ECO:0007669"/>
    <property type="project" value="UniProtKB-KW"/>
</dbReference>
<dbReference type="GO" id="GO:0005840">
    <property type="term" value="C:ribosome"/>
    <property type="evidence" value="ECO:0007669"/>
    <property type="project" value="UniProtKB-KW"/>
</dbReference>
<dbReference type="GO" id="GO:0019843">
    <property type="term" value="F:rRNA binding"/>
    <property type="evidence" value="ECO:0007669"/>
    <property type="project" value="UniProtKB-UniRule"/>
</dbReference>
<dbReference type="GO" id="GO:0003735">
    <property type="term" value="F:structural constituent of ribosome"/>
    <property type="evidence" value="ECO:0007669"/>
    <property type="project" value="InterPro"/>
</dbReference>
<dbReference type="GO" id="GO:0006412">
    <property type="term" value="P:translation"/>
    <property type="evidence" value="ECO:0007669"/>
    <property type="project" value="UniProtKB-UniRule"/>
</dbReference>
<dbReference type="HAMAP" id="MF_01363">
    <property type="entry name" value="Ribosomal_bL21"/>
    <property type="match status" value="1"/>
</dbReference>
<dbReference type="InterPro" id="IPR028909">
    <property type="entry name" value="bL21-like"/>
</dbReference>
<dbReference type="InterPro" id="IPR036164">
    <property type="entry name" value="bL21-like_sf"/>
</dbReference>
<dbReference type="InterPro" id="IPR001787">
    <property type="entry name" value="Ribosomal_bL21"/>
</dbReference>
<dbReference type="NCBIfam" id="TIGR00061">
    <property type="entry name" value="L21"/>
    <property type="match status" value="1"/>
</dbReference>
<dbReference type="PANTHER" id="PTHR21349">
    <property type="entry name" value="50S RIBOSOMAL PROTEIN L21"/>
    <property type="match status" value="1"/>
</dbReference>
<dbReference type="PANTHER" id="PTHR21349:SF0">
    <property type="entry name" value="LARGE RIBOSOMAL SUBUNIT PROTEIN BL21M"/>
    <property type="match status" value="1"/>
</dbReference>
<dbReference type="Pfam" id="PF00829">
    <property type="entry name" value="Ribosomal_L21p"/>
    <property type="match status" value="1"/>
</dbReference>
<dbReference type="SUPFAM" id="SSF141091">
    <property type="entry name" value="L21p-like"/>
    <property type="match status" value="1"/>
</dbReference>
<protein>
    <recommendedName>
        <fullName evidence="1">Large ribosomal subunit protein bL21</fullName>
    </recommendedName>
    <alternativeName>
        <fullName evidence="2">50S ribosomal protein L21</fullName>
    </alternativeName>
</protein>
<comment type="function">
    <text evidence="1">This protein binds to 23S rRNA in the presence of protein L20.</text>
</comment>
<comment type="subunit">
    <text evidence="1">Part of the 50S ribosomal subunit. Contacts protein L20.</text>
</comment>
<comment type="similarity">
    <text evidence="1">Belongs to the bacterial ribosomal protein bL21 family.</text>
</comment>
<accession>Q4JWU1</accession>